<proteinExistence type="evidence at protein level"/>
<gene>
    <name evidence="8" type="primary">pcs</name>
    <name type="ordered locus">PA3857</name>
</gene>
<feature type="chain" id="PRO_0000425222" description="Phosphatidylcholine synthase">
    <location>
        <begin position="1"/>
        <end position="238"/>
    </location>
</feature>
<feature type="topological domain" description="Cytoplasmic" evidence="1 2">
    <location>
        <begin position="1"/>
        <end position="16"/>
    </location>
</feature>
<feature type="transmembrane region" description="Helical; Name=1" evidence="2">
    <location>
        <begin position="17"/>
        <end position="37"/>
    </location>
</feature>
<feature type="topological domain" description="Periplasmic" evidence="2">
    <location>
        <begin position="38"/>
        <end position="41"/>
    </location>
</feature>
<feature type="transmembrane region" description="Helical; Name=2" evidence="2">
    <location>
        <begin position="42"/>
        <end position="62"/>
    </location>
</feature>
<feature type="topological domain" description="Cytoplasmic" evidence="2">
    <location>
        <begin position="63"/>
        <end position="75"/>
    </location>
</feature>
<feature type="transmembrane region" description="Helical; Name=3" evidence="2">
    <location>
        <begin position="76"/>
        <end position="96"/>
    </location>
</feature>
<feature type="topological domain" description="Periplasmic" evidence="2">
    <location>
        <begin position="97"/>
        <end position="104"/>
    </location>
</feature>
<feature type="transmembrane region" description="Helical; Name=4" evidence="2">
    <location>
        <begin position="105"/>
        <end position="125"/>
    </location>
</feature>
<feature type="topological domain" description="Cytoplasmic" evidence="2">
    <location>
        <begin position="126"/>
        <end position="132"/>
    </location>
</feature>
<feature type="transmembrane region" description="Helical; Name=5" evidence="2">
    <location>
        <begin position="133"/>
        <end position="153"/>
    </location>
</feature>
<feature type="topological domain" description="Periplasmic" evidence="2">
    <location>
        <begin position="154"/>
        <end position="155"/>
    </location>
</feature>
<feature type="transmembrane region" description="Helical; Name=6" evidence="2">
    <location>
        <begin position="156"/>
        <end position="176"/>
    </location>
</feature>
<feature type="topological domain" description="Cytoplasmic" evidence="2">
    <location>
        <begin position="177"/>
        <end position="183"/>
    </location>
</feature>
<feature type="transmembrane region" description="Helical; Name=7" evidence="2">
    <location>
        <begin position="184"/>
        <end position="204"/>
    </location>
</feature>
<feature type="topological domain" description="Periplasmic" evidence="2">
    <location>
        <begin position="205"/>
        <end position="209"/>
    </location>
</feature>
<feature type="transmembrane region" description="Helical; Name=8" evidence="2">
    <location>
        <begin position="210"/>
        <end position="230"/>
    </location>
</feature>
<feature type="topological domain" description="Cytoplasmic" evidence="1 2">
    <location>
        <begin position="231"/>
        <end position="238"/>
    </location>
</feature>
<organism>
    <name type="scientific">Pseudomonas aeruginosa (strain ATCC 15692 / DSM 22644 / CIP 104116 / JCM 14847 / LMG 12228 / 1C / PRS 101 / PAO1)</name>
    <dbReference type="NCBI Taxonomy" id="208964"/>
    <lineage>
        <taxon>Bacteria</taxon>
        <taxon>Pseudomonadati</taxon>
        <taxon>Pseudomonadota</taxon>
        <taxon>Gammaproteobacteria</taxon>
        <taxon>Pseudomonadales</taxon>
        <taxon>Pseudomonadaceae</taxon>
        <taxon>Pseudomonas</taxon>
    </lineage>
</organism>
<name>PCS_PSEAE</name>
<dbReference type="EC" id="2.7.8.24" evidence="3 4"/>
<dbReference type="EMBL" id="AE004091">
    <property type="protein sequence ID" value="AAG07244.1"/>
    <property type="molecule type" value="Genomic_DNA"/>
</dbReference>
<dbReference type="PIR" id="D83165">
    <property type="entry name" value="D83165"/>
</dbReference>
<dbReference type="RefSeq" id="NP_252546.1">
    <property type="nucleotide sequence ID" value="NC_002516.2"/>
</dbReference>
<dbReference type="SMR" id="Q9HXE9"/>
<dbReference type="STRING" id="208964.PA3857"/>
<dbReference type="PaxDb" id="208964-PA3857"/>
<dbReference type="DNASU" id="879785"/>
<dbReference type="GeneID" id="879785"/>
<dbReference type="KEGG" id="pae:PA3857"/>
<dbReference type="PATRIC" id="fig|208964.12.peg.4038"/>
<dbReference type="PseudoCAP" id="PA3857"/>
<dbReference type="HOGENOM" id="CLU_086279_0_0_6"/>
<dbReference type="InParanoid" id="Q9HXE9"/>
<dbReference type="OrthoDB" id="350520at2"/>
<dbReference type="PhylomeDB" id="Q9HXE9"/>
<dbReference type="BioCyc" id="PAER208964:G1FZ6-3928-MONOMER"/>
<dbReference type="BRENDA" id="2.7.8.24">
    <property type="organism ID" value="5087"/>
</dbReference>
<dbReference type="Proteomes" id="UP000002438">
    <property type="component" value="Chromosome"/>
</dbReference>
<dbReference type="GO" id="GO:0005886">
    <property type="term" value="C:plasma membrane"/>
    <property type="evidence" value="ECO:0007669"/>
    <property type="project" value="UniProtKB-SubCell"/>
</dbReference>
<dbReference type="GO" id="GO:0050520">
    <property type="term" value="F:phosphatidylcholine synthase activity"/>
    <property type="evidence" value="ECO:0000314"/>
    <property type="project" value="UniProtKB"/>
</dbReference>
<dbReference type="GO" id="GO:0008654">
    <property type="term" value="P:phospholipid biosynthetic process"/>
    <property type="evidence" value="ECO:0000314"/>
    <property type="project" value="UniProtKB"/>
</dbReference>
<dbReference type="FunFam" id="1.20.120.1760:FF:000034">
    <property type="entry name" value="Phosphatidylcholine synthase"/>
    <property type="match status" value="1"/>
</dbReference>
<dbReference type="Gene3D" id="1.20.120.1760">
    <property type="match status" value="1"/>
</dbReference>
<dbReference type="InterPro" id="IPR000462">
    <property type="entry name" value="CDP-OH_P_trans"/>
</dbReference>
<dbReference type="InterPro" id="IPR043130">
    <property type="entry name" value="CDP-OH_PTrfase_TM_dom"/>
</dbReference>
<dbReference type="InterPro" id="IPR026027">
    <property type="entry name" value="PcS"/>
</dbReference>
<dbReference type="NCBIfam" id="NF045887">
    <property type="entry name" value="PhCholSynPs"/>
    <property type="match status" value="1"/>
</dbReference>
<dbReference type="Pfam" id="PF01066">
    <property type="entry name" value="CDP-OH_P_transf"/>
    <property type="match status" value="1"/>
</dbReference>
<dbReference type="PIRSF" id="PIRSF000851">
    <property type="entry name" value="PcS"/>
    <property type="match status" value="1"/>
</dbReference>
<evidence type="ECO:0000250" key="1">
    <source>
        <dbReference type="UniProtKB" id="Q9KJY8"/>
    </source>
</evidence>
<evidence type="ECO:0000255" key="2"/>
<evidence type="ECO:0000269" key="3">
    <source>
    </source>
</evidence>
<evidence type="ECO:0000269" key="4">
    <source>
    </source>
</evidence>
<evidence type="ECO:0000303" key="5">
    <source>
    </source>
</evidence>
<evidence type="ECO:0000303" key="6">
    <source>
    </source>
</evidence>
<evidence type="ECO:0000305" key="7"/>
<evidence type="ECO:0000312" key="8">
    <source>
        <dbReference type="EMBL" id="AAG07244.1"/>
    </source>
</evidence>
<comment type="function">
    <text evidence="3 4">Condenses choline with CDP-diglyceride to produce phosphatidylcholine and CMP.</text>
</comment>
<comment type="catalytic activity">
    <reaction evidence="3 4">
        <text>a CDP-1,2-diacyl-sn-glycerol + choline = a 1,2-diacyl-sn-glycero-3-phosphocholine + CMP + H(+)</text>
        <dbReference type="Rhea" id="RHEA:14597"/>
        <dbReference type="ChEBI" id="CHEBI:15354"/>
        <dbReference type="ChEBI" id="CHEBI:15378"/>
        <dbReference type="ChEBI" id="CHEBI:57643"/>
        <dbReference type="ChEBI" id="CHEBI:58332"/>
        <dbReference type="ChEBI" id="CHEBI:60377"/>
        <dbReference type="EC" id="2.7.8.24"/>
    </reaction>
</comment>
<comment type="cofactor">
    <cofactor evidence="1">
        <name>Mn(2+)</name>
        <dbReference type="ChEBI" id="CHEBI:29035"/>
    </cofactor>
</comment>
<comment type="subcellular location">
    <subcellularLocation>
        <location evidence="1">Cell inner membrane</location>
        <topology evidence="1">Multi-pass membrane protein</topology>
    </subcellularLocation>
</comment>
<comment type="similarity">
    <text evidence="2">Belongs to the CDP-alcohol phosphatidyltransferase class-I family.</text>
</comment>
<protein>
    <recommendedName>
        <fullName evidence="5 6 8">Phosphatidylcholine synthase</fullName>
        <shortName evidence="1">PC synthase</shortName>
        <shortName evidence="5 6">PCS</shortName>
        <ecNumber evidence="3 4">2.7.8.24</ecNumber>
    </recommendedName>
    <alternativeName>
        <fullName evidence="5">CDP-diglyceride-choline O-phosphatidyltransferase</fullName>
    </alternativeName>
</protein>
<keyword id="KW-0997">Cell inner membrane</keyword>
<keyword id="KW-1003">Cell membrane</keyword>
<keyword id="KW-0444">Lipid biosynthesis</keyword>
<keyword id="KW-0443">Lipid metabolism</keyword>
<keyword id="KW-0464">Manganese</keyword>
<keyword id="KW-0472">Membrane</keyword>
<keyword id="KW-0594">Phospholipid biosynthesis</keyword>
<keyword id="KW-1208">Phospholipid metabolism</keyword>
<keyword id="KW-1185">Reference proteome</keyword>
<keyword id="KW-0808">Transferase</keyword>
<keyword id="KW-0812">Transmembrane</keyword>
<keyword id="KW-1133">Transmembrane helix</keyword>
<sequence>MPVNLSMTPINKAKAWGVHAVTASGVILALLALLALVDNKPQACLLWLGLALLVDGLDGTLARKYEVKEMLPHFDGSVLDLVIDYLTYVFIPAIFIYRYIPLPEHFELLAVGVILVSSLFCFCNVNMKSTDNYFVGFPAAWNVVAVYFYVLDLHPWVNLATVLVLAALTLTRMKFLHPFRVRQFMPLNIAVTFVWLISSGLLIVQQPADLPILLGLWFAASAYFVGICLWRSAREWFG</sequence>
<reference evidence="8" key="1">
    <citation type="journal article" date="2000" name="Nature">
        <title>Complete genome sequence of Pseudomonas aeruginosa PAO1, an opportunistic pathogen.</title>
        <authorList>
            <person name="Stover C.K."/>
            <person name="Pham X.-Q.T."/>
            <person name="Erwin A.L."/>
            <person name="Mizoguchi S.D."/>
            <person name="Warrener P."/>
            <person name="Hickey M.J."/>
            <person name="Brinkman F.S.L."/>
            <person name="Hufnagle W.O."/>
            <person name="Kowalik D.J."/>
            <person name="Lagrou M."/>
            <person name="Garber R.L."/>
            <person name="Goltry L."/>
            <person name="Tolentino E."/>
            <person name="Westbrock-Wadman S."/>
            <person name="Yuan Y."/>
            <person name="Brody L.L."/>
            <person name="Coulter S.N."/>
            <person name="Folger K.R."/>
            <person name="Kas A."/>
            <person name="Larbig K."/>
            <person name="Lim R.M."/>
            <person name="Smith K.A."/>
            <person name="Spencer D.H."/>
            <person name="Wong G.K.-S."/>
            <person name="Wu Z."/>
            <person name="Paulsen I.T."/>
            <person name="Reizer J."/>
            <person name="Saier M.H. Jr."/>
            <person name="Hancock R.E.W."/>
            <person name="Lory S."/>
            <person name="Olson M.V."/>
        </authorList>
    </citation>
    <scope>NUCLEOTIDE SEQUENCE [LARGE SCALE GENOMIC DNA]</scope>
    <source>
        <strain>ATCC 15692 / DSM 22644 / CIP 104116 / JCM 14847 / LMG 12228 / 1C / PRS 101 / PAO1</strain>
    </source>
</reference>
<reference evidence="7" key="2">
    <citation type="journal article" date="2002" name="J. Bacteriol.">
        <title>Pseudomonas aeruginosa synthesizes phosphatidylcholine by use of the phosphatidylcholine synthase pathway.</title>
        <authorList>
            <person name="Wilderman P.J."/>
            <person name="Vasil A.I."/>
            <person name="Martin W.E."/>
            <person name="Murphy R.C."/>
            <person name="Vasil M.L."/>
        </authorList>
    </citation>
    <scope>FUNCTION</scope>
    <scope>CATALYTIC ACTIVITY</scope>
    <source>
        <strain evidence="3">ATCC 15692 / DSM 22644 / CIP 104116 / JCM 14847 / LMG 12228 / 1C / PRS 101 / PAO1</strain>
    </source>
</reference>
<reference evidence="7" key="3">
    <citation type="journal article" date="2003" name="Microbiology">
        <title>Pathways for phosphatidylcholine biosynthesis in bacteria.</title>
        <authorList>
            <person name="Martinez-Morales F."/>
            <person name="Schobert M."/>
            <person name="Lopez-Lara I.M."/>
            <person name="Geiger O."/>
        </authorList>
    </citation>
    <scope>FUNCTION</scope>
    <scope>CATALYTIC ACTIVITY</scope>
    <source>
        <strain evidence="4">ATCC 15692 / DSM 22644 / CIP 104116 / JCM 14847 / LMG 12228 / 1C / PRS 101 / PAO1</strain>
    </source>
</reference>
<accession>Q9HXE9</accession>